<evidence type="ECO:0000255" key="1">
    <source>
        <dbReference type="HAMAP-Rule" id="MF_00185"/>
    </source>
</evidence>
<dbReference type="EC" id="2.5.1.75" evidence="1"/>
<dbReference type="EMBL" id="CP001098">
    <property type="protein sequence ID" value="ACL69915.1"/>
    <property type="molecule type" value="Genomic_DNA"/>
</dbReference>
<dbReference type="RefSeq" id="WP_012636100.1">
    <property type="nucleotide sequence ID" value="NC_011899.1"/>
</dbReference>
<dbReference type="SMR" id="B8CX96"/>
<dbReference type="STRING" id="373903.Hore_11650"/>
<dbReference type="KEGG" id="hor:Hore_11650"/>
<dbReference type="eggNOG" id="COG0324">
    <property type="taxonomic scope" value="Bacteria"/>
</dbReference>
<dbReference type="HOGENOM" id="CLU_032616_0_1_9"/>
<dbReference type="OrthoDB" id="9776390at2"/>
<dbReference type="Proteomes" id="UP000000719">
    <property type="component" value="Chromosome"/>
</dbReference>
<dbReference type="GO" id="GO:0005524">
    <property type="term" value="F:ATP binding"/>
    <property type="evidence" value="ECO:0007669"/>
    <property type="project" value="UniProtKB-UniRule"/>
</dbReference>
<dbReference type="GO" id="GO:0052381">
    <property type="term" value="F:tRNA dimethylallyltransferase activity"/>
    <property type="evidence" value="ECO:0007669"/>
    <property type="project" value="UniProtKB-UniRule"/>
</dbReference>
<dbReference type="GO" id="GO:0006400">
    <property type="term" value="P:tRNA modification"/>
    <property type="evidence" value="ECO:0007669"/>
    <property type="project" value="TreeGrafter"/>
</dbReference>
<dbReference type="FunFam" id="1.10.20.140:FF:000001">
    <property type="entry name" value="tRNA dimethylallyltransferase"/>
    <property type="match status" value="1"/>
</dbReference>
<dbReference type="Gene3D" id="1.10.20.140">
    <property type="match status" value="1"/>
</dbReference>
<dbReference type="Gene3D" id="3.40.50.300">
    <property type="entry name" value="P-loop containing nucleotide triphosphate hydrolases"/>
    <property type="match status" value="1"/>
</dbReference>
<dbReference type="HAMAP" id="MF_00185">
    <property type="entry name" value="IPP_trans"/>
    <property type="match status" value="1"/>
</dbReference>
<dbReference type="InterPro" id="IPR039657">
    <property type="entry name" value="Dimethylallyltransferase"/>
</dbReference>
<dbReference type="InterPro" id="IPR018022">
    <property type="entry name" value="IPT"/>
</dbReference>
<dbReference type="InterPro" id="IPR027417">
    <property type="entry name" value="P-loop_NTPase"/>
</dbReference>
<dbReference type="NCBIfam" id="TIGR00174">
    <property type="entry name" value="miaA"/>
    <property type="match status" value="1"/>
</dbReference>
<dbReference type="PANTHER" id="PTHR11088">
    <property type="entry name" value="TRNA DIMETHYLALLYLTRANSFERASE"/>
    <property type="match status" value="1"/>
</dbReference>
<dbReference type="PANTHER" id="PTHR11088:SF60">
    <property type="entry name" value="TRNA DIMETHYLALLYLTRANSFERASE"/>
    <property type="match status" value="1"/>
</dbReference>
<dbReference type="Pfam" id="PF01715">
    <property type="entry name" value="IPPT"/>
    <property type="match status" value="1"/>
</dbReference>
<dbReference type="SUPFAM" id="SSF52540">
    <property type="entry name" value="P-loop containing nucleoside triphosphate hydrolases"/>
    <property type="match status" value="2"/>
</dbReference>
<proteinExistence type="inferred from homology"/>
<comment type="function">
    <text evidence="1">Catalyzes the transfer of a dimethylallyl group onto the adenine at position 37 in tRNAs that read codons beginning with uridine, leading to the formation of N6-(dimethylallyl)adenosine (i(6)A).</text>
</comment>
<comment type="catalytic activity">
    <reaction evidence="1">
        <text>adenosine(37) in tRNA + dimethylallyl diphosphate = N(6)-dimethylallyladenosine(37) in tRNA + diphosphate</text>
        <dbReference type="Rhea" id="RHEA:26482"/>
        <dbReference type="Rhea" id="RHEA-COMP:10162"/>
        <dbReference type="Rhea" id="RHEA-COMP:10375"/>
        <dbReference type="ChEBI" id="CHEBI:33019"/>
        <dbReference type="ChEBI" id="CHEBI:57623"/>
        <dbReference type="ChEBI" id="CHEBI:74411"/>
        <dbReference type="ChEBI" id="CHEBI:74415"/>
        <dbReference type="EC" id="2.5.1.75"/>
    </reaction>
</comment>
<comment type="cofactor">
    <cofactor evidence="1">
        <name>Mg(2+)</name>
        <dbReference type="ChEBI" id="CHEBI:18420"/>
    </cofactor>
</comment>
<comment type="subunit">
    <text evidence="1">Monomer.</text>
</comment>
<comment type="similarity">
    <text evidence="1">Belongs to the IPP transferase family.</text>
</comment>
<accession>B8CX96</accession>
<gene>
    <name evidence="1" type="primary">miaA</name>
    <name type="ordered locus">Hore_11650</name>
</gene>
<sequence>MIKPLTNHGNKNIYPDNSTLIVILGPTAVGKTSLSLQLARDINGEIISADSMQIYKDMDIGTAKASQKERNIIPHYMIDIIKPDQEFSVAEYQAMVDNLIPGIVYRNKVPILVGGTGLYIRAVIEGFLFPEMDKNIELRQKLQKEAQQYGNKYVYNKLKKIDPELAKKLHPNDLRRVIRGIEVYHQTGKTMTYFKKEKQKKGDRYRNLKIGLYREREELYKRINKRVDIMIEQGLIDEVKYLLTKYPDLSKTARQGLGYKEIIGYLKREYDREEAIRLLKRNTRRYAKRQLTWFRRDQDINWFNLSTGDYKKIYSEIKKLSRDFLLDF</sequence>
<organism>
    <name type="scientific">Halothermothrix orenii (strain H 168 / OCM 544 / DSM 9562)</name>
    <dbReference type="NCBI Taxonomy" id="373903"/>
    <lineage>
        <taxon>Bacteria</taxon>
        <taxon>Bacillati</taxon>
        <taxon>Bacillota</taxon>
        <taxon>Clostridia</taxon>
        <taxon>Halanaerobiales</taxon>
        <taxon>Halothermotrichaceae</taxon>
        <taxon>Halothermothrix</taxon>
    </lineage>
</organism>
<keyword id="KW-0067">ATP-binding</keyword>
<keyword id="KW-0460">Magnesium</keyword>
<keyword id="KW-0547">Nucleotide-binding</keyword>
<keyword id="KW-1185">Reference proteome</keyword>
<keyword id="KW-0808">Transferase</keyword>
<keyword id="KW-0819">tRNA processing</keyword>
<feature type="chain" id="PRO_0000377182" description="tRNA dimethylallyltransferase">
    <location>
        <begin position="1"/>
        <end position="328"/>
    </location>
</feature>
<feature type="region of interest" description="Interaction with substrate tRNA" evidence="1">
    <location>
        <begin position="50"/>
        <end position="53"/>
    </location>
</feature>
<feature type="binding site" evidence="1">
    <location>
        <begin position="25"/>
        <end position="32"/>
    </location>
    <ligand>
        <name>ATP</name>
        <dbReference type="ChEBI" id="CHEBI:30616"/>
    </ligand>
</feature>
<feature type="binding site" evidence="1">
    <location>
        <begin position="27"/>
        <end position="32"/>
    </location>
    <ligand>
        <name>substrate</name>
    </ligand>
</feature>
<feature type="site" description="Interaction with substrate tRNA" evidence="1">
    <location>
        <position position="116"/>
    </location>
</feature>
<feature type="site" description="Interaction with substrate tRNA" evidence="1">
    <location>
        <position position="139"/>
    </location>
</feature>
<name>MIAA_HALOH</name>
<reference key="1">
    <citation type="journal article" date="2009" name="PLoS ONE">
        <title>Genome analysis of the anaerobic thermohalophilic bacterium Halothermothrix orenii.</title>
        <authorList>
            <person name="Mavromatis K."/>
            <person name="Ivanova N."/>
            <person name="Anderson I."/>
            <person name="Lykidis A."/>
            <person name="Hooper S.D."/>
            <person name="Sun H."/>
            <person name="Kunin V."/>
            <person name="Lapidus A."/>
            <person name="Hugenholtz P."/>
            <person name="Patel B."/>
            <person name="Kyrpides N.C."/>
        </authorList>
    </citation>
    <scope>NUCLEOTIDE SEQUENCE [LARGE SCALE GENOMIC DNA]</scope>
    <source>
        <strain>H 168 / OCM 544 / DSM 9562</strain>
    </source>
</reference>
<protein>
    <recommendedName>
        <fullName evidence="1">tRNA dimethylallyltransferase</fullName>
        <ecNumber evidence="1">2.5.1.75</ecNumber>
    </recommendedName>
    <alternativeName>
        <fullName evidence="1">Dimethylallyl diphosphate:tRNA dimethylallyltransferase</fullName>
        <shortName evidence="1">DMAPP:tRNA dimethylallyltransferase</shortName>
        <shortName evidence="1">DMATase</shortName>
    </alternativeName>
    <alternativeName>
        <fullName evidence="1">Isopentenyl-diphosphate:tRNA isopentenyltransferase</fullName>
        <shortName evidence="1">IPP transferase</shortName>
        <shortName evidence="1">IPPT</shortName>
        <shortName evidence="1">IPTase</shortName>
    </alternativeName>
</protein>